<sequence length="174" mass="20037">MNYFELFNLPVAFDVNTSELADKYRELQRTVHPDKFAAASEQEKLLAVSRTAMVNDGFQTLKDPIRRAEHMLALKGVDIRHETQTVRDTAFLMQQMEWREALEEITHADDPHCLIADLYQSFGDFQKQVTAKLKTLLVSEDDNDLQAAADQVRKLKFMAKLHVELERAEDALLD</sequence>
<reference key="1">
    <citation type="submission" date="2006-12" db="EMBL/GenBank/DDBJ databases">
        <title>Complete sequence of Shewanella amazonensis SB2B.</title>
        <authorList>
            <consortium name="US DOE Joint Genome Institute"/>
            <person name="Copeland A."/>
            <person name="Lucas S."/>
            <person name="Lapidus A."/>
            <person name="Barry K."/>
            <person name="Detter J.C."/>
            <person name="Glavina del Rio T."/>
            <person name="Hammon N."/>
            <person name="Israni S."/>
            <person name="Dalin E."/>
            <person name="Tice H."/>
            <person name="Pitluck S."/>
            <person name="Munk A.C."/>
            <person name="Brettin T."/>
            <person name="Bruce D."/>
            <person name="Han C."/>
            <person name="Tapia R."/>
            <person name="Gilna P."/>
            <person name="Schmutz J."/>
            <person name="Larimer F."/>
            <person name="Land M."/>
            <person name="Hauser L."/>
            <person name="Kyrpides N."/>
            <person name="Mikhailova N."/>
            <person name="Fredrickson J."/>
            <person name="Richardson P."/>
        </authorList>
    </citation>
    <scope>NUCLEOTIDE SEQUENCE [LARGE SCALE GENOMIC DNA]</scope>
    <source>
        <strain>ATCC BAA-1098 / SB2B</strain>
    </source>
</reference>
<organism>
    <name type="scientific">Shewanella amazonensis (strain ATCC BAA-1098 / SB2B)</name>
    <dbReference type="NCBI Taxonomy" id="326297"/>
    <lineage>
        <taxon>Bacteria</taxon>
        <taxon>Pseudomonadati</taxon>
        <taxon>Pseudomonadota</taxon>
        <taxon>Gammaproteobacteria</taxon>
        <taxon>Alteromonadales</taxon>
        <taxon>Shewanellaceae</taxon>
        <taxon>Shewanella</taxon>
    </lineage>
</organism>
<name>HSCB_SHEAM</name>
<feature type="chain" id="PRO_1000083033" description="Co-chaperone protein HscB homolog">
    <location>
        <begin position="1"/>
        <end position="174"/>
    </location>
</feature>
<feature type="domain" description="J" evidence="1">
    <location>
        <begin position="2"/>
        <end position="74"/>
    </location>
</feature>
<protein>
    <recommendedName>
        <fullName evidence="1">Co-chaperone protein HscB homolog</fullName>
    </recommendedName>
</protein>
<dbReference type="EMBL" id="CP000507">
    <property type="protein sequence ID" value="ABL99503.1"/>
    <property type="molecule type" value="Genomic_DNA"/>
</dbReference>
<dbReference type="RefSeq" id="WP_011759412.1">
    <property type="nucleotide sequence ID" value="NC_008700.1"/>
</dbReference>
<dbReference type="SMR" id="A1S547"/>
<dbReference type="STRING" id="326297.Sama_1296"/>
<dbReference type="KEGG" id="saz:Sama_1296"/>
<dbReference type="eggNOG" id="COG1076">
    <property type="taxonomic scope" value="Bacteria"/>
</dbReference>
<dbReference type="HOGENOM" id="CLU_068529_2_0_6"/>
<dbReference type="OrthoDB" id="287587at2"/>
<dbReference type="Proteomes" id="UP000009175">
    <property type="component" value="Chromosome"/>
</dbReference>
<dbReference type="GO" id="GO:1990230">
    <property type="term" value="C:iron-sulfur cluster transfer complex"/>
    <property type="evidence" value="ECO:0007669"/>
    <property type="project" value="TreeGrafter"/>
</dbReference>
<dbReference type="GO" id="GO:0001671">
    <property type="term" value="F:ATPase activator activity"/>
    <property type="evidence" value="ECO:0007669"/>
    <property type="project" value="InterPro"/>
</dbReference>
<dbReference type="GO" id="GO:0051087">
    <property type="term" value="F:protein-folding chaperone binding"/>
    <property type="evidence" value="ECO:0007669"/>
    <property type="project" value="InterPro"/>
</dbReference>
<dbReference type="GO" id="GO:0044571">
    <property type="term" value="P:[2Fe-2S] cluster assembly"/>
    <property type="evidence" value="ECO:0007669"/>
    <property type="project" value="InterPro"/>
</dbReference>
<dbReference type="GO" id="GO:0051259">
    <property type="term" value="P:protein complex oligomerization"/>
    <property type="evidence" value="ECO:0007669"/>
    <property type="project" value="InterPro"/>
</dbReference>
<dbReference type="GO" id="GO:0006457">
    <property type="term" value="P:protein folding"/>
    <property type="evidence" value="ECO:0007669"/>
    <property type="project" value="UniProtKB-UniRule"/>
</dbReference>
<dbReference type="CDD" id="cd06257">
    <property type="entry name" value="DnaJ"/>
    <property type="match status" value="1"/>
</dbReference>
<dbReference type="Gene3D" id="1.10.287.110">
    <property type="entry name" value="DnaJ domain"/>
    <property type="match status" value="1"/>
</dbReference>
<dbReference type="Gene3D" id="1.20.1280.20">
    <property type="entry name" value="HscB, C-terminal domain"/>
    <property type="match status" value="1"/>
</dbReference>
<dbReference type="HAMAP" id="MF_00682">
    <property type="entry name" value="HscB"/>
    <property type="match status" value="1"/>
</dbReference>
<dbReference type="InterPro" id="IPR001623">
    <property type="entry name" value="DnaJ_domain"/>
</dbReference>
<dbReference type="InterPro" id="IPR004640">
    <property type="entry name" value="HscB"/>
</dbReference>
<dbReference type="InterPro" id="IPR036386">
    <property type="entry name" value="HscB_C_sf"/>
</dbReference>
<dbReference type="InterPro" id="IPR009073">
    <property type="entry name" value="HscB_oligo_C"/>
</dbReference>
<dbReference type="InterPro" id="IPR036869">
    <property type="entry name" value="J_dom_sf"/>
</dbReference>
<dbReference type="NCBIfam" id="TIGR00714">
    <property type="entry name" value="hscB"/>
    <property type="match status" value="1"/>
</dbReference>
<dbReference type="NCBIfam" id="NF003449">
    <property type="entry name" value="PRK05014.1"/>
    <property type="match status" value="1"/>
</dbReference>
<dbReference type="PANTHER" id="PTHR14021">
    <property type="entry name" value="IRON-SULFUR CLUSTER CO-CHAPERONE PROTEIN HSCB"/>
    <property type="match status" value="1"/>
</dbReference>
<dbReference type="PANTHER" id="PTHR14021:SF15">
    <property type="entry name" value="IRON-SULFUR CLUSTER CO-CHAPERONE PROTEIN HSCB"/>
    <property type="match status" value="1"/>
</dbReference>
<dbReference type="Pfam" id="PF07743">
    <property type="entry name" value="HSCB_C"/>
    <property type="match status" value="1"/>
</dbReference>
<dbReference type="SMART" id="SM00271">
    <property type="entry name" value="DnaJ"/>
    <property type="match status" value="1"/>
</dbReference>
<dbReference type="SUPFAM" id="SSF46565">
    <property type="entry name" value="Chaperone J-domain"/>
    <property type="match status" value="1"/>
</dbReference>
<dbReference type="SUPFAM" id="SSF47144">
    <property type="entry name" value="HSC20 (HSCB), C-terminal oligomerisation domain"/>
    <property type="match status" value="1"/>
</dbReference>
<dbReference type="PROSITE" id="PS50076">
    <property type="entry name" value="DNAJ_2"/>
    <property type="match status" value="1"/>
</dbReference>
<evidence type="ECO:0000255" key="1">
    <source>
        <dbReference type="HAMAP-Rule" id="MF_00682"/>
    </source>
</evidence>
<accession>A1S547</accession>
<comment type="function">
    <text evidence="1">Co-chaperone involved in the maturation of iron-sulfur cluster-containing proteins. Seems to help targeting proteins to be folded toward HscA.</text>
</comment>
<comment type="subunit">
    <text evidence="1">Interacts with HscA and stimulates its ATPase activity.</text>
</comment>
<comment type="similarity">
    <text evidence="1">Belongs to the HscB family.</text>
</comment>
<gene>
    <name evidence="1" type="primary">hscB</name>
    <name type="ordered locus">Sama_1296</name>
</gene>
<proteinExistence type="inferred from homology"/>
<keyword id="KW-0143">Chaperone</keyword>
<keyword id="KW-1185">Reference proteome</keyword>